<keyword id="KW-0175">Coiled coil</keyword>
<keyword id="KW-0238">DNA-binding</keyword>
<keyword id="KW-0539">Nucleus</keyword>
<keyword id="KW-1185">Reference proteome</keyword>
<keyword id="KW-0804">Transcription</keyword>
<keyword id="KW-0805">Transcription regulation</keyword>
<gene>
    <name evidence="13" type="primary">mxl-1</name>
    <name evidence="8" type="synonym">svh-14</name>
    <name evidence="13" type="ORF">T19B10.11</name>
</gene>
<protein>
    <recommendedName>
        <fullName evidence="9">Max-like protein 1</fullName>
    </recommendedName>
</protein>
<sequence length="124" mass="13843">MSDMSDLEDDQTGHCGSGEHSGPFDPKRHAREQHNALERRRRDNIKDMYTSLREVVPDANGERVQASRAVILKKAIESIEKGQSDSATLSVDVAEQESKNAKLREEIARLKAKKDPSSSQSIIQ</sequence>
<comment type="function">
    <text evidence="4 5 6 7">Transcriptional regulator which binds to the E box motif 5'-CACGTG-3', when in a heterodimeric complex with mdl-1 (PubMed:9764821). Involved in the control of lifespan in response to dietary restriction, the decline in protein homeostasis associated with normal aging and may overlap with the insulin-like signaling pathway (PubMed:24699255). Involved in promoting infection by the microsporidian pathogen N.parisii (PubMed:27402359). Required for the expression of svh-2 and the promotion of axon regeneration after injury (PubMed:31393064).</text>
</comment>
<comment type="subunit">
    <text evidence="6 7">Heterodimer with mdl-1 in presence and absence of DNA (PubMed:9764821). Interacts with tdpt-1; the interaction promotes axon regeneration after injury (PubMed:31393064).</text>
</comment>
<comment type="interaction">
    <interactant intactId="EBI-1182982">
        <id>G5EEH5</id>
    </interactant>
    <interactant intactId="EBI-1182971">
        <id>G5EG44</id>
        <label>mdl-1</label>
    </interactant>
    <organismsDiffer>false</organismsDiffer>
    <experiments>5</experiments>
</comment>
<comment type="subcellular location">
    <subcellularLocation>
        <location evidence="2">Nucleus</location>
    </subcellularLocation>
</comment>
<comment type="tissue specificity">
    <text evidence="6">Expressed in D-type motor neurons.</text>
</comment>
<comment type="developmental stage">
    <text evidence="7">Expressed weakly in L1 animals and strongly throughout the remainder of larval development (PubMed:9764821). Expressed in posterior intestinal cells, neurons, hypodermal cells and body wall muscles (PubMed:9764821).</text>
</comment>
<comment type="disruption phenotype">
    <text evidence="4">RNAi-mediated knockdown increases lifespan, which is abolished on an mxl-2 or mml-1 mutant background, or by simultaneous RNAi-mediated knockdown of daf-16 or pha-4 (PubMed:24699255). RNAi-mediated knockdown causes delayed onset of polyglutamine-mediated paralysis (PubMed:24699255).</text>
</comment>
<comment type="similarity">
    <text evidence="10">Belongs to the MAX family.</text>
</comment>
<feature type="chain" id="PRO_0000451994" description="Max-like protein 1">
    <location>
        <begin position="1"/>
        <end position="124"/>
    </location>
</feature>
<feature type="domain" description="bHLH" evidence="2">
    <location>
        <begin position="29"/>
        <end position="82"/>
    </location>
</feature>
<feature type="region of interest" description="Disordered" evidence="3">
    <location>
        <begin position="1"/>
        <end position="44"/>
    </location>
</feature>
<feature type="region of interest" description="Basic motif" evidence="2">
    <location>
        <begin position="29"/>
        <end position="42"/>
    </location>
</feature>
<feature type="region of interest" description="Helix-loop-helix motif" evidence="2">
    <location>
        <begin position="43"/>
        <end position="82"/>
    </location>
</feature>
<feature type="coiled-coil region" evidence="1">
    <location>
        <begin position="86"/>
        <end position="113"/>
    </location>
</feature>
<feature type="compositionally biased region" description="Acidic residues" evidence="3">
    <location>
        <begin position="1"/>
        <end position="10"/>
    </location>
</feature>
<feature type="compositionally biased region" description="Basic and acidic residues" evidence="3">
    <location>
        <begin position="32"/>
        <end position="44"/>
    </location>
</feature>
<feature type="mutagenesis site" description="In tm1530; abolishes the induction of svh-2 expression after injury, resulting in reduced frequency of axon regeneration." evidence="6">
    <location>
        <begin position="71"/>
        <end position="124"/>
    </location>
</feature>
<organism evidence="12">
    <name type="scientific">Caenorhabditis elegans</name>
    <dbReference type="NCBI Taxonomy" id="6239"/>
    <lineage>
        <taxon>Eukaryota</taxon>
        <taxon>Metazoa</taxon>
        <taxon>Ecdysozoa</taxon>
        <taxon>Nematoda</taxon>
        <taxon>Chromadorea</taxon>
        <taxon>Rhabditida</taxon>
        <taxon>Rhabditina</taxon>
        <taxon>Rhabditomorpha</taxon>
        <taxon>Rhabditoidea</taxon>
        <taxon>Rhabditidae</taxon>
        <taxon>Peloderinae</taxon>
        <taxon>Caenorhabditis</taxon>
    </lineage>
</organism>
<dbReference type="EMBL" id="U82967">
    <property type="protein sequence ID" value="AAB40926.1"/>
    <property type="molecule type" value="mRNA"/>
</dbReference>
<dbReference type="EMBL" id="BX284605">
    <property type="protein sequence ID" value="CAA98543.1"/>
    <property type="molecule type" value="Genomic_DNA"/>
</dbReference>
<dbReference type="PIR" id="T24979">
    <property type="entry name" value="T24979"/>
</dbReference>
<dbReference type="RefSeq" id="NP_505856.1">
    <property type="nucleotide sequence ID" value="NM_073455.7"/>
</dbReference>
<dbReference type="SMR" id="G5EEH5"/>
<dbReference type="FunCoup" id="G5EEH5">
    <property type="interactions" value="2788"/>
</dbReference>
<dbReference type="IntAct" id="G5EEH5">
    <property type="interactions" value="1"/>
</dbReference>
<dbReference type="STRING" id="6239.T19B10.11.1"/>
<dbReference type="PaxDb" id="6239-T19B10.11"/>
<dbReference type="EnsemblMetazoa" id="T19B10.11.1">
    <property type="protein sequence ID" value="T19B10.11.1"/>
    <property type="gene ID" value="WBGene00003509"/>
</dbReference>
<dbReference type="GeneID" id="179557"/>
<dbReference type="KEGG" id="cel:CELE_T19B10.11"/>
<dbReference type="AGR" id="WB:WBGene00003509"/>
<dbReference type="CTD" id="179557"/>
<dbReference type="WormBase" id="T19B10.11">
    <property type="protein sequence ID" value="CE16417"/>
    <property type="gene ID" value="WBGene00003509"/>
    <property type="gene designation" value="mxl-1"/>
</dbReference>
<dbReference type="eggNOG" id="KOG2483">
    <property type="taxonomic scope" value="Eukaryota"/>
</dbReference>
<dbReference type="GeneTree" id="ENSGT00530000064011"/>
<dbReference type="HOGENOM" id="CLU_109424_1_1_1"/>
<dbReference type="InParanoid" id="G5EEH5"/>
<dbReference type="OMA" id="IPGMQNE"/>
<dbReference type="OrthoDB" id="8964853at2759"/>
<dbReference type="PhylomeDB" id="G5EEH5"/>
<dbReference type="PRO" id="PR:G5EEH5"/>
<dbReference type="Proteomes" id="UP000001940">
    <property type="component" value="Chromosome V"/>
</dbReference>
<dbReference type="Bgee" id="WBGene00003509">
    <property type="expression patterns" value="Expressed in embryo and 3 other cell types or tissues"/>
</dbReference>
<dbReference type="GO" id="GO:0005634">
    <property type="term" value="C:nucleus"/>
    <property type="evidence" value="ECO:0000314"/>
    <property type="project" value="WormBase"/>
</dbReference>
<dbReference type="GO" id="GO:0090575">
    <property type="term" value="C:RNA polymerase II transcription regulator complex"/>
    <property type="evidence" value="ECO:0000318"/>
    <property type="project" value="GO_Central"/>
</dbReference>
<dbReference type="GO" id="GO:0005667">
    <property type="term" value="C:transcription regulator complex"/>
    <property type="evidence" value="ECO:0000353"/>
    <property type="project" value="WormBase"/>
</dbReference>
<dbReference type="GO" id="GO:0003677">
    <property type="term" value="F:DNA binding"/>
    <property type="evidence" value="ECO:0007669"/>
    <property type="project" value="UniProtKB-KW"/>
</dbReference>
<dbReference type="GO" id="GO:0003700">
    <property type="term" value="F:DNA-binding transcription factor activity"/>
    <property type="evidence" value="ECO:0000318"/>
    <property type="project" value="GO_Central"/>
</dbReference>
<dbReference type="GO" id="GO:0019904">
    <property type="term" value="F:protein domain specific binding"/>
    <property type="evidence" value="ECO:0000353"/>
    <property type="project" value="WormBase"/>
</dbReference>
<dbReference type="GO" id="GO:0046982">
    <property type="term" value="F:protein heterodimerization activity"/>
    <property type="evidence" value="ECO:0000353"/>
    <property type="project" value="WormBase"/>
</dbReference>
<dbReference type="GO" id="GO:0008340">
    <property type="term" value="P:determination of adult lifespan"/>
    <property type="evidence" value="ECO:0000316"/>
    <property type="project" value="WormBase"/>
</dbReference>
<dbReference type="GO" id="GO:0045944">
    <property type="term" value="P:positive regulation of transcription by RNA polymerase II"/>
    <property type="evidence" value="ECO:0000318"/>
    <property type="project" value="GO_Central"/>
</dbReference>
<dbReference type="FunFam" id="4.10.280.10:FF:000019">
    <property type="entry name" value="Myc proto-oncogene protein"/>
    <property type="match status" value="1"/>
</dbReference>
<dbReference type="Gene3D" id="4.10.280.10">
    <property type="entry name" value="Helix-loop-helix DNA-binding domain"/>
    <property type="match status" value="1"/>
</dbReference>
<dbReference type="InterPro" id="IPR011598">
    <property type="entry name" value="bHLH_dom"/>
</dbReference>
<dbReference type="InterPro" id="IPR036638">
    <property type="entry name" value="HLH_DNA-bd_sf"/>
</dbReference>
<dbReference type="InterPro" id="IPR002418">
    <property type="entry name" value="Tscrpt_reg_Myc"/>
</dbReference>
<dbReference type="PANTHER" id="PTHR10328:SF10">
    <property type="entry name" value="MAX-LIKE PROTEIN 1"/>
    <property type="match status" value="1"/>
</dbReference>
<dbReference type="PANTHER" id="PTHR10328">
    <property type="entry name" value="PROTEIN MAX MYC-ASSOCIATED FACTOR X"/>
    <property type="match status" value="1"/>
</dbReference>
<dbReference type="Pfam" id="PF00010">
    <property type="entry name" value="HLH"/>
    <property type="match status" value="1"/>
</dbReference>
<dbReference type="PRINTS" id="PR00044">
    <property type="entry name" value="LEUZIPPRMYC"/>
</dbReference>
<dbReference type="SMART" id="SM00353">
    <property type="entry name" value="HLH"/>
    <property type="match status" value="1"/>
</dbReference>
<dbReference type="SUPFAM" id="SSF47459">
    <property type="entry name" value="HLH, helix-loop-helix DNA-binding domain"/>
    <property type="match status" value="1"/>
</dbReference>
<dbReference type="PROSITE" id="PS50888">
    <property type="entry name" value="BHLH"/>
    <property type="match status" value="1"/>
</dbReference>
<reference evidence="11" key="1">
    <citation type="journal article" date="1998" name="Oncogene">
        <title>The C. elegans MDL-1 and MXL-1 proteins can functionally substitute for vertebrate MAD and MAX.</title>
        <authorList>
            <person name="Yuan J."/>
            <person name="Tirabassi R.S."/>
            <person name="Bush A.B."/>
            <person name="Cole M.D."/>
        </authorList>
    </citation>
    <scope>NUCLEOTIDE SEQUENCE [MRNA]</scope>
    <scope>FUNCTION</scope>
    <scope>SUBUNIT</scope>
    <scope>DEVELOPMENTAL STAGE</scope>
    <source>
        <strain evidence="11">Bristol N2</strain>
    </source>
</reference>
<reference evidence="12" key="2">
    <citation type="journal article" date="1998" name="Science">
        <title>Genome sequence of the nematode C. elegans: a platform for investigating biology.</title>
        <authorList>
            <consortium name="The C. elegans sequencing consortium"/>
        </authorList>
    </citation>
    <scope>NUCLEOTIDE SEQUENCE [LARGE SCALE GENOMIC DNA]</scope>
    <source>
        <strain evidence="12">Bristol N2</strain>
    </source>
</reference>
<reference evidence="10" key="3">
    <citation type="journal article" date="2014" name="PLoS Genet.">
        <title>The Caenorhabditis elegans Myc-Mondo/Mad complexes integrate diverse longevity signals.</title>
        <authorList>
            <person name="Johnson D.W."/>
            <person name="Llop J.R."/>
            <person name="Farrell S.F."/>
            <person name="Yuan J."/>
            <person name="Stolzenburg L.R."/>
            <person name="Samuelson A.V."/>
        </authorList>
    </citation>
    <scope>FUNCTION</scope>
    <scope>DISRUPTION PHENOTYPE</scope>
</reference>
<reference evidence="10" key="4">
    <citation type="journal article" date="2016" name="G3 (Bethesda)">
        <title>Microsporidia Intracellular Development Relies on Myc Interaction Network Transcription Factors in the Host.</title>
        <authorList>
            <person name="Botts M.R."/>
            <person name="Cohen L.B."/>
            <person name="Probert C.S."/>
            <person name="Wu F."/>
            <person name="Troemel E.R."/>
        </authorList>
    </citation>
    <scope>FUNCTION</scope>
</reference>
<reference evidence="10" key="5">
    <citation type="journal article" date="2019" name="EMBO Rep.">
        <title>TDP2 negatively regulates axon regeneration by inducing SUMOylation of an Ets transcription factor.</title>
        <authorList>
            <person name="Sakai Y."/>
            <person name="Hanafusa H."/>
            <person name="Pastuhov S.I."/>
            <person name="Shimizu T."/>
            <person name="Li C."/>
            <person name="Hisamoto N."/>
            <person name="Matsumoto K."/>
        </authorList>
    </citation>
    <scope>FUNCTION</scope>
    <scope>INTERACTION WITH TDPT-1</scope>
    <scope>TISSUE SPECIFICITY</scope>
    <scope>MUTAGENESIS OF 71-ILE--GLN-124</scope>
</reference>
<proteinExistence type="evidence at protein level"/>
<name>MXL1_CAEEL</name>
<accession>G5EEH5</accession>
<evidence type="ECO:0000255" key="1"/>
<evidence type="ECO:0000255" key="2">
    <source>
        <dbReference type="PROSITE-ProRule" id="PRU00981"/>
    </source>
</evidence>
<evidence type="ECO:0000256" key="3">
    <source>
        <dbReference type="SAM" id="MobiDB-lite"/>
    </source>
</evidence>
<evidence type="ECO:0000269" key="4">
    <source>
    </source>
</evidence>
<evidence type="ECO:0000269" key="5">
    <source>
    </source>
</evidence>
<evidence type="ECO:0000269" key="6">
    <source>
    </source>
</evidence>
<evidence type="ECO:0000269" key="7">
    <source>
    </source>
</evidence>
<evidence type="ECO:0000303" key="8">
    <source>
    </source>
</evidence>
<evidence type="ECO:0000303" key="9">
    <source>
    </source>
</evidence>
<evidence type="ECO:0000305" key="10"/>
<evidence type="ECO:0000312" key="11">
    <source>
        <dbReference type="EMBL" id="AAB40926.1"/>
    </source>
</evidence>
<evidence type="ECO:0000312" key="12">
    <source>
        <dbReference type="Proteomes" id="UP000001940"/>
    </source>
</evidence>
<evidence type="ECO:0000312" key="13">
    <source>
        <dbReference type="WormBase" id="T19B10.11"/>
    </source>
</evidence>